<protein>
    <recommendedName>
        <fullName evidence="1">Urease accessory protein UreD 1</fullName>
    </recommendedName>
</protein>
<feature type="chain" id="PRO_0000346591" description="Urease accessory protein UreD 1">
    <location>
        <begin position="1"/>
        <end position="255"/>
    </location>
</feature>
<gene>
    <name evidence="1" type="primary">ureD1</name>
    <name type="ordered locus">SACE_0639</name>
</gene>
<proteinExistence type="inferred from homology"/>
<accession>A4F7G0</accession>
<name>URED1_SACEN</name>
<reference key="1">
    <citation type="journal article" date="2007" name="Nat. Biotechnol.">
        <title>Complete genome sequence of the erythromycin-producing bacterium Saccharopolyspora erythraea NRRL23338.</title>
        <authorList>
            <person name="Oliynyk M."/>
            <person name="Samborskyy M."/>
            <person name="Lester J.B."/>
            <person name="Mironenko T."/>
            <person name="Scott N."/>
            <person name="Dickens S."/>
            <person name="Haydock S.F."/>
            <person name="Leadlay P.F."/>
        </authorList>
    </citation>
    <scope>NUCLEOTIDE SEQUENCE [LARGE SCALE GENOMIC DNA]</scope>
    <source>
        <strain>ATCC 11635 / DSM 40517 / JCM 4748 / NBRC 13426 / NCIMB 8594 / NRRL 2338</strain>
    </source>
</reference>
<sequence>MRATAALRVELAADGRNVVRELRSQPPITLIPRRGVASAAGGPAVVHLVGSATSPMGGDRVDLRVHVGAGAALRLSGTAATVALPGQRTGHSRATVRIEVEAGGTVEYLPEATVVSGRADHRADMRVELAEHARARCREVLVLGRYGERPGVLTTSTHVVRAGTPLLRQRLDIGEQRLAASAGYLAGARVLAAETVVWDHDPAAPAGGQWWSLAPLSGGGALATSVAADAVTAQRGLAEALGHHPDAEALTRELW</sequence>
<evidence type="ECO:0000255" key="1">
    <source>
        <dbReference type="HAMAP-Rule" id="MF_01384"/>
    </source>
</evidence>
<dbReference type="EMBL" id="AM420293">
    <property type="protein sequence ID" value="CAL99984.1"/>
    <property type="molecule type" value="Genomic_DNA"/>
</dbReference>
<dbReference type="RefSeq" id="WP_009950037.1">
    <property type="nucleotide sequence ID" value="NC_009142.1"/>
</dbReference>
<dbReference type="SMR" id="A4F7G0"/>
<dbReference type="STRING" id="405948.SACE_0639"/>
<dbReference type="KEGG" id="sen:SACE_0639"/>
<dbReference type="eggNOG" id="COG0829">
    <property type="taxonomic scope" value="Bacteria"/>
</dbReference>
<dbReference type="HOGENOM" id="CLU_055097_2_0_11"/>
<dbReference type="OrthoDB" id="8677206at2"/>
<dbReference type="Proteomes" id="UP000006728">
    <property type="component" value="Chromosome"/>
</dbReference>
<dbReference type="GO" id="GO:0005737">
    <property type="term" value="C:cytoplasm"/>
    <property type="evidence" value="ECO:0007669"/>
    <property type="project" value="UniProtKB-SubCell"/>
</dbReference>
<dbReference type="GO" id="GO:0016151">
    <property type="term" value="F:nickel cation binding"/>
    <property type="evidence" value="ECO:0007669"/>
    <property type="project" value="UniProtKB-UniRule"/>
</dbReference>
<dbReference type="HAMAP" id="MF_01384">
    <property type="entry name" value="UreD"/>
    <property type="match status" value="1"/>
</dbReference>
<dbReference type="InterPro" id="IPR002669">
    <property type="entry name" value="UreD"/>
</dbReference>
<dbReference type="PANTHER" id="PTHR33643">
    <property type="entry name" value="UREASE ACCESSORY PROTEIN D"/>
    <property type="match status" value="1"/>
</dbReference>
<dbReference type="PANTHER" id="PTHR33643:SF1">
    <property type="entry name" value="UREASE ACCESSORY PROTEIN D"/>
    <property type="match status" value="1"/>
</dbReference>
<dbReference type="Pfam" id="PF01774">
    <property type="entry name" value="UreD"/>
    <property type="match status" value="1"/>
</dbReference>
<organism>
    <name type="scientific">Saccharopolyspora erythraea (strain ATCC 11635 / DSM 40517 / JCM 4748 / NBRC 13426 / NCIMB 8594 / NRRL 2338)</name>
    <dbReference type="NCBI Taxonomy" id="405948"/>
    <lineage>
        <taxon>Bacteria</taxon>
        <taxon>Bacillati</taxon>
        <taxon>Actinomycetota</taxon>
        <taxon>Actinomycetes</taxon>
        <taxon>Pseudonocardiales</taxon>
        <taxon>Pseudonocardiaceae</taxon>
        <taxon>Saccharopolyspora</taxon>
    </lineage>
</organism>
<comment type="function">
    <text evidence="1">Required for maturation of urease via the functional incorporation of the urease nickel metallocenter.</text>
</comment>
<comment type="subunit">
    <text evidence="1">UreD, UreF and UreG form a complex that acts as a GTP-hydrolysis-dependent molecular chaperone, activating the urease apoprotein by helping to assemble the nickel containing metallocenter of UreC. The UreE protein probably delivers the nickel.</text>
</comment>
<comment type="subcellular location">
    <subcellularLocation>
        <location evidence="1">Cytoplasm</location>
    </subcellularLocation>
</comment>
<comment type="similarity">
    <text evidence="1">Belongs to the UreD family.</text>
</comment>
<keyword id="KW-0143">Chaperone</keyword>
<keyword id="KW-0963">Cytoplasm</keyword>
<keyword id="KW-0996">Nickel insertion</keyword>
<keyword id="KW-1185">Reference proteome</keyword>